<gene>
    <name evidence="1" type="primary">ndk</name>
    <name type="ordered locus">Rru_A2169</name>
</gene>
<proteinExistence type="inferred from homology"/>
<accession>Q2RSC6</accession>
<dbReference type="EC" id="2.7.4.6" evidence="1"/>
<dbReference type="EMBL" id="CP000230">
    <property type="protein sequence ID" value="ABC22969.1"/>
    <property type="molecule type" value="Genomic_DNA"/>
</dbReference>
<dbReference type="RefSeq" id="WP_011390018.1">
    <property type="nucleotide sequence ID" value="NC_007643.1"/>
</dbReference>
<dbReference type="RefSeq" id="YP_427256.1">
    <property type="nucleotide sequence ID" value="NC_007643.1"/>
</dbReference>
<dbReference type="SMR" id="Q2RSC6"/>
<dbReference type="STRING" id="269796.Rru_A2169"/>
<dbReference type="EnsemblBacteria" id="ABC22969">
    <property type="protein sequence ID" value="ABC22969"/>
    <property type="gene ID" value="Rru_A2169"/>
</dbReference>
<dbReference type="KEGG" id="rru:Rru_A2169"/>
<dbReference type="PATRIC" id="fig|269796.9.peg.2263"/>
<dbReference type="eggNOG" id="COG0105">
    <property type="taxonomic scope" value="Bacteria"/>
</dbReference>
<dbReference type="HOGENOM" id="CLU_060216_8_1_5"/>
<dbReference type="PhylomeDB" id="Q2RSC6"/>
<dbReference type="Proteomes" id="UP000001929">
    <property type="component" value="Chromosome"/>
</dbReference>
<dbReference type="GO" id="GO:0005737">
    <property type="term" value="C:cytoplasm"/>
    <property type="evidence" value="ECO:0007669"/>
    <property type="project" value="UniProtKB-SubCell"/>
</dbReference>
<dbReference type="GO" id="GO:0005524">
    <property type="term" value="F:ATP binding"/>
    <property type="evidence" value="ECO:0007669"/>
    <property type="project" value="UniProtKB-UniRule"/>
</dbReference>
<dbReference type="GO" id="GO:0046872">
    <property type="term" value="F:metal ion binding"/>
    <property type="evidence" value="ECO:0007669"/>
    <property type="project" value="UniProtKB-KW"/>
</dbReference>
<dbReference type="GO" id="GO:0004550">
    <property type="term" value="F:nucleoside diphosphate kinase activity"/>
    <property type="evidence" value="ECO:0007669"/>
    <property type="project" value="UniProtKB-UniRule"/>
</dbReference>
<dbReference type="GO" id="GO:0006241">
    <property type="term" value="P:CTP biosynthetic process"/>
    <property type="evidence" value="ECO:0007669"/>
    <property type="project" value="UniProtKB-UniRule"/>
</dbReference>
<dbReference type="GO" id="GO:0006183">
    <property type="term" value="P:GTP biosynthetic process"/>
    <property type="evidence" value="ECO:0007669"/>
    <property type="project" value="UniProtKB-UniRule"/>
</dbReference>
<dbReference type="GO" id="GO:0006228">
    <property type="term" value="P:UTP biosynthetic process"/>
    <property type="evidence" value="ECO:0007669"/>
    <property type="project" value="UniProtKB-UniRule"/>
</dbReference>
<dbReference type="CDD" id="cd04413">
    <property type="entry name" value="NDPk_I"/>
    <property type="match status" value="1"/>
</dbReference>
<dbReference type="FunFam" id="3.30.70.141:FF:000001">
    <property type="entry name" value="Nucleoside diphosphate kinase"/>
    <property type="match status" value="1"/>
</dbReference>
<dbReference type="Gene3D" id="3.30.70.141">
    <property type="entry name" value="Nucleoside diphosphate kinase-like domain"/>
    <property type="match status" value="1"/>
</dbReference>
<dbReference type="HAMAP" id="MF_00451">
    <property type="entry name" value="NDP_kinase"/>
    <property type="match status" value="1"/>
</dbReference>
<dbReference type="InterPro" id="IPR034907">
    <property type="entry name" value="NDK-like_dom"/>
</dbReference>
<dbReference type="InterPro" id="IPR036850">
    <property type="entry name" value="NDK-like_dom_sf"/>
</dbReference>
<dbReference type="InterPro" id="IPR001564">
    <property type="entry name" value="Nucleoside_diP_kinase"/>
</dbReference>
<dbReference type="NCBIfam" id="NF001908">
    <property type="entry name" value="PRK00668.1"/>
    <property type="match status" value="1"/>
</dbReference>
<dbReference type="PANTHER" id="PTHR46161">
    <property type="entry name" value="NUCLEOSIDE DIPHOSPHATE KINASE"/>
    <property type="match status" value="1"/>
</dbReference>
<dbReference type="PANTHER" id="PTHR46161:SF3">
    <property type="entry name" value="NUCLEOSIDE DIPHOSPHATE KINASE DDB_G0292928-RELATED"/>
    <property type="match status" value="1"/>
</dbReference>
<dbReference type="Pfam" id="PF00334">
    <property type="entry name" value="NDK"/>
    <property type="match status" value="1"/>
</dbReference>
<dbReference type="PRINTS" id="PR01243">
    <property type="entry name" value="NUCDPKINASE"/>
</dbReference>
<dbReference type="SMART" id="SM00562">
    <property type="entry name" value="NDK"/>
    <property type="match status" value="1"/>
</dbReference>
<dbReference type="SUPFAM" id="SSF54919">
    <property type="entry name" value="Nucleoside diphosphate kinase, NDK"/>
    <property type="match status" value="1"/>
</dbReference>
<dbReference type="PROSITE" id="PS51374">
    <property type="entry name" value="NDPK_LIKE"/>
    <property type="match status" value="1"/>
</dbReference>
<name>NDK_RHORT</name>
<protein>
    <recommendedName>
        <fullName evidence="1">Nucleoside diphosphate kinase</fullName>
        <shortName evidence="1">NDK</shortName>
        <shortName evidence="1">NDP kinase</shortName>
        <ecNumber evidence="1">2.7.4.6</ecNumber>
    </recommendedName>
    <alternativeName>
        <fullName evidence="1">Nucleoside-2-P kinase</fullName>
    </alternativeName>
</protein>
<comment type="function">
    <text evidence="1">Major role in the synthesis of nucleoside triphosphates other than ATP. The ATP gamma phosphate is transferred to the NDP beta phosphate via a ping-pong mechanism, using a phosphorylated active-site intermediate.</text>
</comment>
<comment type="catalytic activity">
    <reaction evidence="1">
        <text>a 2'-deoxyribonucleoside 5'-diphosphate + ATP = a 2'-deoxyribonucleoside 5'-triphosphate + ADP</text>
        <dbReference type="Rhea" id="RHEA:44640"/>
        <dbReference type="ChEBI" id="CHEBI:30616"/>
        <dbReference type="ChEBI" id="CHEBI:61560"/>
        <dbReference type="ChEBI" id="CHEBI:73316"/>
        <dbReference type="ChEBI" id="CHEBI:456216"/>
        <dbReference type="EC" id="2.7.4.6"/>
    </reaction>
</comment>
<comment type="catalytic activity">
    <reaction evidence="1">
        <text>a ribonucleoside 5'-diphosphate + ATP = a ribonucleoside 5'-triphosphate + ADP</text>
        <dbReference type="Rhea" id="RHEA:18113"/>
        <dbReference type="ChEBI" id="CHEBI:30616"/>
        <dbReference type="ChEBI" id="CHEBI:57930"/>
        <dbReference type="ChEBI" id="CHEBI:61557"/>
        <dbReference type="ChEBI" id="CHEBI:456216"/>
        <dbReference type="EC" id="2.7.4.6"/>
    </reaction>
</comment>
<comment type="cofactor">
    <cofactor evidence="1">
        <name>Mg(2+)</name>
        <dbReference type="ChEBI" id="CHEBI:18420"/>
    </cofactor>
</comment>
<comment type="subunit">
    <text evidence="1">Homotetramer.</text>
</comment>
<comment type="subcellular location">
    <subcellularLocation>
        <location evidence="1">Cytoplasm</location>
    </subcellularLocation>
</comment>
<comment type="similarity">
    <text evidence="1">Belongs to the NDK family.</text>
</comment>
<evidence type="ECO:0000255" key="1">
    <source>
        <dbReference type="HAMAP-Rule" id="MF_00451"/>
    </source>
</evidence>
<keyword id="KW-0067">ATP-binding</keyword>
<keyword id="KW-0963">Cytoplasm</keyword>
<keyword id="KW-0418">Kinase</keyword>
<keyword id="KW-0460">Magnesium</keyword>
<keyword id="KW-0479">Metal-binding</keyword>
<keyword id="KW-0546">Nucleotide metabolism</keyword>
<keyword id="KW-0547">Nucleotide-binding</keyword>
<keyword id="KW-0597">Phosphoprotein</keyword>
<keyword id="KW-1185">Reference proteome</keyword>
<keyword id="KW-0808">Transferase</keyword>
<reference key="1">
    <citation type="journal article" date="2011" name="Stand. Genomic Sci.">
        <title>Complete genome sequence of Rhodospirillum rubrum type strain (S1).</title>
        <authorList>
            <person name="Munk A.C."/>
            <person name="Copeland A."/>
            <person name="Lucas S."/>
            <person name="Lapidus A."/>
            <person name="Del Rio T.G."/>
            <person name="Barry K."/>
            <person name="Detter J.C."/>
            <person name="Hammon N."/>
            <person name="Israni S."/>
            <person name="Pitluck S."/>
            <person name="Brettin T."/>
            <person name="Bruce D."/>
            <person name="Han C."/>
            <person name="Tapia R."/>
            <person name="Gilna P."/>
            <person name="Schmutz J."/>
            <person name="Larimer F."/>
            <person name="Land M."/>
            <person name="Kyrpides N.C."/>
            <person name="Mavromatis K."/>
            <person name="Richardson P."/>
            <person name="Rohde M."/>
            <person name="Goeker M."/>
            <person name="Klenk H.P."/>
            <person name="Zhang Y."/>
            <person name="Roberts G.P."/>
            <person name="Reslewic S."/>
            <person name="Schwartz D.C."/>
        </authorList>
    </citation>
    <scope>NUCLEOTIDE SEQUENCE [LARGE SCALE GENOMIC DNA]</scope>
    <source>
        <strain>ATCC 11170 / ATH 1.1.1 / DSM 467 / LMG 4362 / NCIMB 8255 / S1</strain>
    </source>
</reference>
<feature type="chain" id="PRO_0000242513" description="Nucleoside diphosphate kinase">
    <location>
        <begin position="1"/>
        <end position="140"/>
    </location>
</feature>
<feature type="active site" description="Pros-phosphohistidine intermediate" evidence="1">
    <location>
        <position position="117"/>
    </location>
</feature>
<feature type="binding site" evidence="1">
    <location>
        <position position="11"/>
    </location>
    <ligand>
        <name>ATP</name>
        <dbReference type="ChEBI" id="CHEBI:30616"/>
    </ligand>
</feature>
<feature type="binding site" evidence="1">
    <location>
        <position position="59"/>
    </location>
    <ligand>
        <name>ATP</name>
        <dbReference type="ChEBI" id="CHEBI:30616"/>
    </ligand>
</feature>
<feature type="binding site" evidence="1">
    <location>
        <position position="87"/>
    </location>
    <ligand>
        <name>ATP</name>
        <dbReference type="ChEBI" id="CHEBI:30616"/>
    </ligand>
</feature>
<feature type="binding site" evidence="1">
    <location>
        <position position="93"/>
    </location>
    <ligand>
        <name>ATP</name>
        <dbReference type="ChEBI" id="CHEBI:30616"/>
    </ligand>
</feature>
<feature type="binding site" evidence="1">
    <location>
        <position position="104"/>
    </location>
    <ligand>
        <name>ATP</name>
        <dbReference type="ChEBI" id="CHEBI:30616"/>
    </ligand>
</feature>
<feature type="binding site" evidence="1">
    <location>
        <position position="114"/>
    </location>
    <ligand>
        <name>ATP</name>
        <dbReference type="ChEBI" id="CHEBI:30616"/>
    </ligand>
</feature>
<sequence>MAIERTLSIIKPDATRRNLTGAINARFEEAGLRIVGQKRLRLTTAQAEGFYEVHKERSFFGSLVEFMTSGPVVVQVLEGENAVLKNREVMGATNPANAAEHTIRKDFAESIEANSVHGSDSAENAAHEIAYFFAQTEIVA</sequence>
<organism>
    <name type="scientific">Rhodospirillum rubrum (strain ATCC 11170 / ATH 1.1.1 / DSM 467 / LMG 4362 / NCIMB 8255 / S1)</name>
    <dbReference type="NCBI Taxonomy" id="269796"/>
    <lineage>
        <taxon>Bacteria</taxon>
        <taxon>Pseudomonadati</taxon>
        <taxon>Pseudomonadota</taxon>
        <taxon>Alphaproteobacteria</taxon>
        <taxon>Rhodospirillales</taxon>
        <taxon>Rhodospirillaceae</taxon>
        <taxon>Rhodospirillum</taxon>
    </lineage>
</organism>